<feature type="chain" id="PRO_0000383229" description="Nucleotide-binding protein COPRO5265_0725">
    <location>
        <begin position="1"/>
        <end position="289"/>
    </location>
</feature>
<feature type="binding site" evidence="1">
    <location>
        <begin position="9"/>
        <end position="16"/>
    </location>
    <ligand>
        <name>ATP</name>
        <dbReference type="ChEBI" id="CHEBI:30616"/>
    </ligand>
</feature>
<feature type="binding site" evidence="1">
    <location>
        <begin position="59"/>
        <end position="62"/>
    </location>
    <ligand>
        <name>GTP</name>
        <dbReference type="ChEBI" id="CHEBI:37565"/>
    </ligand>
</feature>
<gene>
    <name type="ordered locus">COPRO5265_0725</name>
</gene>
<accession>B5Y8H6</accession>
<name>Y725_COPPD</name>
<dbReference type="EMBL" id="CP001145">
    <property type="protein sequence ID" value="ACI17329.1"/>
    <property type="molecule type" value="Genomic_DNA"/>
</dbReference>
<dbReference type="RefSeq" id="WP_012543981.1">
    <property type="nucleotide sequence ID" value="NC_011295.1"/>
</dbReference>
<dbReference type="SMR" id="B5Y8H6"/>
<dbReference type="STRING" id="309798.COPRO5265_0725"/>
<dbReference type="KEGG" id="cpo:COPRO5265_0725"/>
<dbReference type="eggNOG" id="COG1660">
    <property type="taxonomic scope" value="Bacteria"/>
</dbReference>
<dbReference type="HOGENOM" id="CLU_059558_0_0_9"/>
<dbReference type="OrthoDB" id="9784461at2"/>
<dbReference type="Proteomes" id="UP000001732">
    <property type="component" value="Chromosome"/>
</dbReference>
<dbReference type="GO" id="GO:0005524">
    <property type="term" value="F:ATP binding"/>
    <property type="evidence" value="ECO:0007669"/>
    <property type="project" value="UniProtKB-UniRule"/>
</dbReference>
<dbReference type="GO" id="GO:0005525">
    <property type="term" value="F:GTP binding"/>
    <property type="evidence" value="ECO:0007669"/>
    <property type="project" value="UniProtKB-UniRule"/>
</dbReference>
<dbReference type="Gene3D" id="3.40.50.300">
    <property type="entry name" value="P-loop containing nucleotide triphosphate hydrolases"/>
    <property type="match status" value="1"/>
</dbReference>
<dbReference type="HAMAP" id="MF_00636">
    <property type="entry name" value="RapZ_like"/>
    <property type="match status" value="1"/>
</dbReference>
<dbReference type="InterPro" id="IPR027417">
    <property type="entry name" value="P-loop_NTPase"/>
</dbReference>
<dbReference type="InterPro" id="IPR005337">
    <property type="entry name" value="RapZ-like"/>
</dbReference>
<dbReference type="InterPro" id="IPR053930">
    <property type="entry name" value="RapZ-like_N"/>
</dbReference>
<dbReference type="InterPro" id="IPR053931">
    <property type="entry name" value="RapZ_C"/>
</dbReference>
<dbReference type="NCBIfam" id="NF003828">
    <property type="entry name" value="PRK05416.1"/>
    <property type="match status" value="1"/>
</dbReference>
<dbReference type="PANTHER" id="PTHR30448">
    <property type="entry name" value="RNASE ADAPTER PROTEIN RAPZ"/>
    <property type="match status" value="1"/>
</dbReference>
<dbReference type="PANTHER" id="PTHR30448:SF0">
    <property type="entry name" value="RNASE ADAPTER PROTEIN RAPZ"/>
    <property type="match status" value="1"/>
</dbReference>
<dbReference type="Pfam" id="PF22740">
    <property type="entry name" value="PapZ_C"/>
    <property type="match status" value="1"/>
</dbReference>
<dbReference type="Pfam" id="PF03668">
    <property type="entry name" value="RapZ-like_N"/>
    <property type="match status" value="1"/>
</dbReference>
<dbReference type="PIRSF" id="PIRSF005052">
    <property type="entry name" value="P-loopkin"/>
    <property type="match status" value="1"/>
</dbReference>
<dbReference type="SUPFAM" id="SSF52540">
    <property type="entry name" value="P-loop containing nucleoside triphosphate hydrolases"/>
    <property type="match status" value="1"/>
</dbReference>
<comment type="function">
    <text evidence="1">Displays ATPase and GTPase activities.</text>
</comment>
<comment type="similarity">
    <text evidence="1">Belongs to the RapZ-like family.</text>
</comment>
<sequence length="289" mass="32730">MQKVIVVTGLSGAGKSTVSKALEDLGYVVVDNVPVDLLHNLLELYEAKNQEQLVAVVVDSRSLRHQGEVSKFVADLKDLKNRMPLDVIFLEASTDTLLSRFNLTRHLHPLVHATGSRIALIEAIEREKELMSELRDVSDVVLDTTGMKERDLVYQVENFIGKDRGPEFYLISFSYQRGLPTNADMIYDARVFQNPYYVDELRTLTGLDDSVAEYVRADHNYGRFLDLWVELAERSYNEHIKMGKPYLVIGVGCTGGQHRSVLVVRDLSDQLTKNGHKVITWHRELGSVN</sequence>
<organism>
    <name type="scientific">Coprothermobacter proteolyticus (strain ATCC 35245 / DSM 5265 / OCM 4 / BT)</name>
    <dbReference type="NCBI Taxonomy" id="309798"/>
    <lineage>
        <taxon>Bacteria</taxon>
        <taxon>Pseudomonadati</taxon>
        <taxon>Coprothermobacterota</taxon>
        <taxon>Coprothermobacteria</taxon>
        <taxon>Coprothermobacterales</taxon>
        <taxon>Coprothermobacteraceae</taxon>
        <taxon>Coprothermobacter</taxon>
    </lineage>
</organism>
<evidence type="ECO:0000255" key="1">
    <source>
        <dbReference type="HAMAP-Rule" id="MF_00636"/>
    </source>
</evidence>
<protein>
    <recommendedName>
        <fullName evidence="1">Nucleotide-binding protein COPRO5265_0725</fullName>
    </recommendedName>
</protein>
<proteinExistence type="inferred from homology"/>
<keyword id="KW-0067">ATP-binding</keyword>
<keyword id="KW-0342">GTP-binding</keyword>
<keyword id="KW-0547">Nucleotide-binding</keyword>
<keyword id="KW-1185">Reference proteome</keyword>
<reference key="1">
    <citation type="submission" date="2008-08" db="EMBL/GenBank/DDBJ databases">
        <title>The complete genome sequence of Coprothermobacter proteolyticus strain ATCC 5245 / DSM 5265 / BT.</title>
        <authorList>
            <person name="Dodson R.J."/>
            <person name="Durkin A.S."/>
            <person name="Wu M."/>
            <person name="Eisen J."/>
            <person name="Sutton G."/>
        </authorList>
    </citation>
    <scope>NUCLEOTIDE SEQUENCE [LARGE SCALE GENOMIC DNA]</scope>
    <source>
        <strain>ATCC 35245 / DSM 5265 / OCM 4 / BT</strain>
    </source>
</reference>